<organism>
    <name type="scientific">Thermococcus onnurineus (strain NA1)</name>
    <dbReference type="NCBI Taxonomy" id="523850"/>
    <lineage>
        <taxon>Archaea</taxon>
        <taxon>Methanobacteriati</taxon>
        <taxon>Methanobacteriota</taxon>
        <taxon>Thermococci</taxon>
        <taxon>Thermococcales</taxon>
        <taxon>Thermococcaceae</taxon>
        <taxon>Thermococcus</taxon>
    </lineage>
</organism>
<evidence type="ECO:0000255" key="1">
    <source>
        <dbReference type="HAMAP-Rule" id="MF_01410"/>
    </source>
</evidence>
<gene>
    <name evidence="1" type="primary">pgiA</name>
    <name type="ordered locus">TON_0247</name>
</gene>
<sequence>MEYKAPIGVKIDLETGVIPGAKKLVRRLSDLKGYFIDEEAYNELLREDPVVYEVYAIEQEEKDGDLNFATTVLYPGKVGKEFFFTKGHYHAKADRAEIYYAIKGKGGMLLQTPEGNAKWVPMEPGTVVYVPPYWAHRTVNTGDEPFIFLAIYPADAGHDYGSIKEKGFSKLVIEEGGEVKVVDNPKWKA</sequence>
<keyword id="KW-0963">Cytoplasm</keyword>
<keyword id="KW-0312">Gluconeogenesis</keyword>
<keyword id="KW-0324">Glycolysis</keyword>
<keyword id="KW-0408">Iron</keyword>
<keyword id="KW-0413">Isomerase</keyword>
<keyword id="KW-0479">Metal-binding</keyword>
<feature type="chain" id="PRO_1000145512" description="Glucose-6-phosphate isomerase">
    <location>
        <begin position="1"/>
        <end position="189"/>
    </location>
</feature>
<feature type="binding site" evidence="1">
    <location>
        <position position="88"/>
    </location>
    <ligand>
        <name>Fe cation</name>
        <dbReference type="ChEBI" id="CHEBI:24875"/>
    </ligand>
</feature>
<feature type="binding site" evidence="1">
    <location>
        <position position="90"/>
    </location>
    <ligand>
        <name>Fe cation</name>
        <dbReference type="ChEBI" id="CHEBI:24875"/>
    </ligand>
</feature>
<feature type="binding site" evidence="1">
    <location>
        <position position="97"/>
    </location>
    <ligand>
        <name>Fe cation</name>
        <dbReference type="ChEBI" id="CHEBI:24875"/>
    </ligand>
</feature>
<feature type="binding site" evidence="1">
    <location>
        <position position="136"/>
    </location>
    <ligand>
        <name>Fe cation</name>
        <dbReference type="ChEBI" id="CHEBI:24875"/>
    </ligand>
</feature>
<accession>B6YT45</accession>
<dbReference type="EC" id="5.3.1.9" evidence="1"/>
<dbReference type="EMBL" id="CP000855">
    <property type="protein sequence ID" value="ACJ15732.1"/>
    <property type="molecule type" value="Genomic_DNA"/>
</dbReference>
<dbReference type="RefSeq" id="WP_012571205.1">
    <property type="nucleotide sequence ID" value="NC_011529.1"/>
</dbReference>
<dbReference type="SMR" id="B6YT45"/>
<dbReference type="STRING" id="523850.TON_0247"/>
<dbReference type="GeneID" id="7017909"/>
<dbReference type="KEGG" id="ton:TON_0247"/>
<dbReference type="PATRIC" id="fig|523850.10.peg.249"/>
<dbReference type="eggNOG" id="arCOG02602">
    <property type="taxonomic scope" value="Archaea"/>
</dbReference>
<dbReference type="HOGENOM" id="CLU_105797_0_0_2"/>
<dbReference type="OrthoDB" id="49661at2157"/>
<dbReference type="UniPathway" id="UPA00109">
    <property type="reaction ID" value="UER00181"/>
</dbReference>
<dbReference type="Proteomes" id="UP000002727">
    <property type="component" value="Chromosome"/>
</dbReference>
<dbReference type="GO" id="GO:0005737">
    <property type="term" value="C:cytoplasm"/>
    <property type="evidence" value="ECO:0007669"/>
    <property type="project" value="UniProtKB-SubCell"/>
</dbReference>
<dbReference type="GO" id="GO:0004347">
    <property type="term" value="F:glucose-6-phosphate isomerase activity"/>
    <property type="evidence" value="ECO:0007669"/>
    <property type="project" value="UniProtKB-UniRule"/>
</dbReference>
<dbReference type="GO" id="GO:0005506">
    <property type="term" value="F:iron ion binding"/>
    <property type="evidence" value="ECO:0007669"/>
    <property type="project" value="InterPro"/>
</dbReference>
<dbReference type="GO" id="GO:0006094">
    <property type="term" value="P:gluconeogenesis"/>
    <property type="evidence" value="ECO:0007669"/>
    <property type="project" value="UniProtKB-UniRule"/>
</dbReference>
<dbReference type="GO" id="GO:0006096">
    <property type="term" value="P:glycolytic process"/>
    <property type="evidence" value="ECO:0007669"/>
    <property type="project" value="UniProtKB-UniRule"/>
</dbReference>
<dbReference type="CDD" id="cd02218">
    <property type="entry name" value="cupin_PGI"/>
    <property type="match status" value="1"/>
</dbReference>
<dbReference type="Gene3D" id="2.60.120.10">
    <property type="entry name" value="Jelly Rolls"/>
    <property type="match status" value="1"/>
</dbReference>
<dbReference type="HAMAP" id="MF_01410">
    <property type="entry name" value="G6P_isomerase_arch"/>
    <property type="match status" value="1"/>
</dbReference>
<dbReference type="InterPro" id="IPR016758">
    <property type="entry name" value="G6P_isomerase_archaea/bacteria"/>
</dbReference>
<dbReference type="InterPro" id="IPR010551">
    <property type="entry name" value="G6P_isomerase_prok"/>
</dbReference>
<dbReference type="InterPro" id="IPR051610">
    <property type="entry name" value="GPI/OXD"/>
</dbReference>
<dbReference type="InterPro" id="IPR014710">
    <property type="entry name" value="RmlC-like_jellyroll"/>
</dbReference>
<dbReference type="InterPro" id="IPR011051">
    <property type="entry name" value="RmlC_Cupin_sf"/>
</dbReference>
<dbReference type="PANTHER" id="PTHR35848:SF6">
    <property type="entry name" value="CUPIN TYPE-2 DOMAIN-CONTAINING PROTEIN"/>
    <property type="match status" value="1"/>
</dbReference>
<dbReference type="PANTHER" id="PTHR35848">
    <property type="entry name" value="OXALATE-BINDING PROTEIN"/>
    <property type="match status" value="1"/>
</dbReference>
<dbReference type="Pfam" id="PF06560">
    <property type="entry name" value="GPI"/>
    <property type="match status" value="1"/>
</dbReference>
<dbReference type="PIRSF" id="PIRSF019325">
    <property type="entry name" value="Glucose-6-phosphate_isomerase"/>
    <property type="match status" value="1"/>
</dbReference>
<dbReference type="SUPFAM" id="SSF51182">
    <property type="entry name" value="RmlC-like cupins"/>
    <property type="match status" value="1"/>
</dbReference>
<reference key="1">
    <citation type="journal article" date="2008" name="J. Bacteriol.">
        <title>The complete genome sequence of Thermococcus onnurineus NA1 reveals a mixed heterotrophic and carboxydotrophic metabolism.</title>
        <authorList>
            <person name="Lee H.S."/>
            <person name="Kang S.G."/>
            <person name="Bae S.S."/>
            <person name="Lim J.K."/>
            <person name="Cho Y."/>
            <person name="Kim Y.J."/>
            <person name="Jeon J.H."/>
            <person name="Cha S.-S."/>
            <person name="Kwon K.K."/>
            <person name="Kim H.-T."/>
            <person name="Park C.-J."/>
            <person name="Lee H.-W."/>
            <person name="Kim S.I."/>
            <person name="Chun J."/>
            <person name="Colwell R.R."/>
            <person name="Kim S.-J."/>
            <person name="Lee J.-H."/>
        </authorList>
    </citation>
    <scope>NUCLEOTIDE SEQUENCE [LARGE SCALE GENOMIC DNA]</scope>
    <source>
        <strain>NA1</strain>
    </source>
</reference>
<protein>
    <recommendedName>
        <fullName evidence="1">Glucose-6-phosphate isomerase</fullName>
        <shortName evidence="1">GPI</shortName>
        <ecNumber evidence="1">5.3.1.9</ecNumber>
    </recommendedName>
    <alternativeName>
        <fullName evidence="1">Phosphoglucose isomerase</fullName>
        <shortName evidence="1">PGI</shortName>
    </alternativeName>
    <alternativeName>
        <fullName evidence="1">Phosphohexose isomerase</fullName>
        <shortName evidence="1">PHI</shortName>
    </alternativeName>
</protein>
<name>GPI_THEON</name>
<comment type="catalytic activity">
    <reaction evidence="1">
        <text>alpha-D-glucose 6-phosphate = beta-D-fructose 6-phosphate</text>
        <dbReference type="Rhea" id="RHEA:11816"/>
        <dbReference type="ChEBI" id="CHEBI:57634"/>
        <dbReference type="ChEBI" id="CHEBI:58225"/>
        <dbReference type="EC" id="5.3.1.9"/>
    </reaction>
</comment>
<comment type="pathway">
    <text evidence="1">Carbohydrate degradation; glycolysis; D-glyceraldehyde 3-phosphate and glycerone phosphate from D-glucose: step 2/4.</text>
</comment>
<comment type="subunit">
    <text evidence="1">Homodimer.</text>
</comment>
<comment type="subcellular location">
    <subcellularLocation>
        <location evidence="1">Cytoplasm</location>
    </subcellularLocation>
</comment>
<comment type="similarity">
    <text evidence="1">Belongs to the archaeal-type GPI family.</text>
</comment>
<proteinExistence type="inferred from homology"/>